<evidence type="ECO:0000255" key="1">
    <source>
        <dbReference type="HAMAP-Rule" id="MF_01080"/>
    </source>
</evidence>
<gene>
    <name evidence="1" type="primary">truB</name>
    <name type="ordered locus">M6_Spy0951</name>
</gene>
<protein>
    <recommendedName>
        <fullName evidence="1">tRNA pseudouridine synthase B</fullName>
        <ecNumber evidence="1">5.4.99.25</ecNumber>
    </recommendedName>
    <alternativeName>
        <fullName evidence="1">tRNA pseudouridine(55) synthase</fullName>
        <shortName evidence="1">Psi55 synthase</shortName>
    </alternativeName>
    <alternativeName>
        <fullName evidence="1">tRNA pseudouridylate synthase</fullName>
    </alternativeName>
    <alternativeName>
        <fullName evidence="1">tRNA-uridine isomerase</fullName>
    </alternativeName>
</protein>
<dbReference type="EC" id="5.4.99.25" evidence="1"/>
<dbReference type="EMBL" id="CP000003">
    <property type="protein sequence ID" value="AAT87086.1"/>
    <property type="molecule type" value="Genomic_DNA"/>
</dbReference>
<dbReference type="RefSeq" id="WP_002989678.1">
    <property type="nucleotide sequence ID" value="NC_006086.1"/>
</dbReference>
<dbReference type="SMR" id="Q5XBX7"/>
<dbReference type="GeneID" id="69900784"/>
<dbReference type="KEGG" id="spa:M6_Spy0951"/>
<dbReference type="HOGENOM" id="CLU_032087_0_1_9"/>
<dbReference type="Proteomes" id="UP000001167">
    <property type="component" value="Chromosome"/>
</dbReference>
<dbReference type="GO" id="GO:0003723">
    <property type="term" value="F:RNA binding"/>
    <property type="evidence" value="ECO:0007669"/>
    <property type="project" value="InterPro"/>
</dbReference>
<dbReference type="GO" id="GO:0160148">
    <property type="term" value="F:tRNA pseudouridine(55) synthase activity"/>
    <property type="evidence" value="ECO:0007669"/>
    <property type="project" value="UniProtKB-EC"/>
</dbReference>
<dbReference type="GO" id="GO:1990481">
    <property type="term" value="P:mRNA pseudouridine synthesis"/>
    <property type="evidence" value="ECO:0007669"/>
    <property type="project" value="TreeGrafter"/>
</dbReference>
<dbReference type="GO" id="GO:0031119">
    <property type="term" value="P:tRNA pseudouridine synthesis"/>
    <property type="evidence" value="ECO:0007669"/>
    <property type="project" value="UniProtKB-UniRule"/>
</dbReference>
<dbReference type="CDD" id="cd02573">
    <property type="entry name" value="PseudoU_synth_EcTruB"/>
    <property type="match status" value="1"/>
</dbReference>
<dbReference type="FunFam" id="3.30.2350.10:FF:000011">
    <property type="entry name" value="tRNA pseudouridine synthase B"/>
    <property type="match status" value="1"/>
</dbReference>
<dbReference type="Gene3D" id="3.30.2350.10">
    <property type="entry name" value="Pseudouridine synthase"/>
    <property type="match status" value="1"/>
</dbReference>
<dbReference type="HAMAP" id="MF_01080">
    <property type="entry name" value="TruB_bact"/>
    <property type="match status" value="1"/>
</dbReference>
<dbReference type="InterPro" id="IPR020103">
    <property type="entry name" value="PsdUridine_synth_cat_dom_sf"/>
</dbReference>
<dbReference type="InterPro" id="IPR002501">
    <property type="entry name" value="PsdUridine_synth_N"/>
</dbReference>
<dbReference type="InterPro" id="IPR014780">
    <property type="entry name" value="tRNA_psdUridine_synth_TruB"/>
</dbReference>
<dbReference type="InterPro" id="IPR032819">
    <property type="entry name" value="TruB_C"/>
</dbReference>
<dbReference type="NCBIfam" id="TIGR00431">
    <property type="entry name" value="TruB"/>
    <property type="match status" value="1"/>
</dbReference>
<dbReference type="PANTHER" id="PTHR13767:SF2">
    <property type="entry name" value="PSEUDOURIDYLATE SYNTHASE TRUB1"/>
    <property type="match status" value="1"/>
</dbReference>
<dbReference type="PANTHER" id="PTHR13767">
    <property type="entry name" value="TRNA-PSEUDOURIDINE SYNTHASE"/>
    <property type="match status" value="1"/>
</dbReference>
<dbReference type="Pfam" id="PF16198">
    <property type="entry name" value="TruB_C_2"/>
    <property type="match status" value="1"/>
</dbReference>
<dbReference type="Pfam" id="PF01509">
    <property type="entry name" value="TruB_N"/>
    <property type="match status" value="1"/>
</dbReference>
<dbReference type="SUPFAM" id="SSF55120">
    <property type="entry name" value="Pseudouridine synthase"/>
    <property type="match status" value="1"/>
</dbReference>
<name>TRUB_STRP6</name>
<organism>
    <name type="scientific">Streptococcus pyogenes serotype M6 (strain ATCC BAA-946 / MGAS10394)</name>
    <dbReference type="NCBI Taxonomy" id="286636"/>
    <lineage>
        <taxon>Bacteria</taxon>
        <taxon>Bacillati</taxon>
        <taxon>Bacillota</taxon>
        <taxon>Bacilli</taxon>
        <taxon>Lactobacillales</taxon>
        <taxon>Streptococcaceae</taxon>
        <taxon>Streptococcus</taxon>
    </lineage>
</organism>
<keyword id="KW-0413">Isomerase</keyword>
<keyword id="KW-0819">tRNA processing</keyword>
<accession>Q5XBX7</accession>
<sequence>MINGIINLKKEAGMTSHDAVFKLRKLLQEKKIGHGGTLDPDVVGVLPIAVGKATRVIEYMTEAGKVYEGQVTLGYSTTTEDASGEVVARSSLPAVLTEELVDQTMTTFLGKITQTPPMYSAVKVNGRKLYEYARAGESVERPRREVTISLFERTSPLNFTEDGLCRFSFKVACSKGTYVRTLAVDLGRALGVESHMSFLQRSASAGLTLETAYTLGEIADMVSKQEMSFLLPIEYGVADLPKMVIDDTELTEISFGRRLSLPSQEPLLAAFHGEKVIAILEKRDQEYKPKKVLI</sequence>
<reference key="1">
    <citation type="journal article" date="2004" name="J. Infect. Dis.">
        <title>Progress toward characterization of the group A Streptococcus metagenome: complete genome sequence of a macrolide-resistant serotype M6 strain.</title>
        <authorList>
            <person name="Banks D.J."/>
            <person name="Porcella S.F."/>
            <person name="Barbian K.D."/>
            <person name="Beres S.B."/>
            <person name="Philips L.E."/>
            <person name="Voyich J.M."/>
            <person name="DeLeo F.R."/>
            <person name="Martin J.M."/>
            <person name="Somerville G.A."/>
            <person name="Musser J.M."/>
        </authorList>
    </citation>
    <scope>NUCLEOTIDE SEQUENCE [LARGE SCALE GENOMIC DNA]</scope>
    <source>
        <strain>ATCC BAA-946 / MGAS10394</strain>
    </source>
</reference>
<feature type="chain" id="PRO_0000121919" description="tRNA pseudouridine synthase B">
    <location>
        <begin position="1"/>
        <end position="294"/>
    </location>
</feature>
<feature type="active site" description="Nucleophile" evidence="1">
    <location>
        <position position="39"/>
    </location>
</feature>
<proteinExistence type="inferred from homology"/>
<comment type="function">
    <text evidence="1">Responsible for synthesis of pseudouridine from uracil-55 in the psi GC loop of transfer RNAs.</text>
</comment>
<comment type="catalytic activity">
    <reaction evidence="1">
        <text>uridine(55) in tRNA = pseudouridine(55) in tRNA</text>
        <dbReference type="Rhea" id="RHEA:42532"/>
        <dbReference type="Rhea" id="RHEA-COMP:10101"/>
        <dbReference type="Rhea" id="RHEA-COMP:10102"/>
        <dbReference type="ChEBI" id="CHEBI:65314"/>
        <dbReference type="ChEBI" id="CHEBI:65315"/>
        <dbReference type="EC" id="5.4.99.25"/>
    </reaction>
</comment>
<comment type="similarity">
    <text evidence="1">Belongs to the pseudouridine synthase TruB family. Type 1 subfamily.</text>
</comment>